<proteinExistence type="inferred from homology"/>
<reference key="1">
    <citation type="submission" date="2006-12" db="EMBL/GenBank/DDBJ databases">
        <authorList>
            <person name="Hendrix L."/>
            <person name="Mohamoud Y."/>
            <person name="Radune D."/>
            <person name="Shvartsbeyn A."/>
            <person name="Daugherty S."/>
            <person name="Dodson R."/>
            <person name="Durkin A.S."/>
            <person name="Harkins D."/>
            <person name="Huot H."/>
            <person name="Kothari S.P."/>
            <person name="Madupu R."/>
            <person name="Li J."/>
            <person name="Nelson W.C."/>
            <person name="Shrivastava S."/>
            <person name="Giglio M.G."/>
            <person name="Haft D."/>
            <person name="Selengut J."/>
            <person name="Fraser-Ligget C."/>
            <person name="Seshadri R."/>
        </authorList>
    </citation>
    <scope>NUCLEOTIDE SEQUENCE [LARGE SCALE GENOMIC DNA]</scope>
    <source>
        <strain>ATCC 35685 / KC583 / Herrer 020/F12,63</strain>
    </source>
</reference>
<dbReference type="EMBL" id="CP000524">
    <property type="protein sequence ID" value="ABM44699.1"/>
    <property type="molecule type" value="Genomic_DNA"/>
</dbReference>
<dbReference type="EMBL" id="CP000524">
    <property type="protein sequence ID" value="ABM45199.1"/>
    <property type="molecule type" value="Genomic_DNA"/>
</dbReference>
<dbReference type="SMR" id="A1USL0"/>
<dbReference type="STRING" id="360095.BARBAKC583_0662"/>
<dbReference type="GeneID" id="4684329"/>
<dbReference type="KEGG" id="bbk:BARBAKC583_0662"/>
<dbReference type="KEGG" id="bbk:BARBAKC583_0694"/>
<dbReference type="PATRIC" id="fig|360095.6.peg.673"/>
<dbReference type="eggNOG" id="COG0049">
    <property type="taxonomic scope" value="Bacteria"/>
</dbReference>
<dbReference type="HOGENOM" id="CLU_072226_1_1_5"/>
<dbReference type="OrthoDB" id="9807653at2"/>
<dbReference type="Proteomes" id="UP000000643">
    <property type="component" value="Chromosome"/>
</dbReference>
<dbReference type="GO" id="GO:0015935">
    <property type="term" value="C:small ribosomal subunit"/>
    <property type="evidence" value="ECO:0007669"/>
    <property type="project" value="InterPro"/>
</dbReference>
<dbReference type="GO" id="GO:0019843">
    <property type="term" value="F:rRNA binding"/>
    <property type="evidence" value="ECO:0007669"/>
    <property type="project" value="UniProtKB-UniRule"/>
</dbReference>
<dbReference type="GO" id="GO:0003735">
    <property type="term" value="F:structural constituent of ribosome"/>
    <property type="evidence" value="ECO:0007669"/>
    <property type="project" value="InterPro"/>
</dbReference>
<dbReference type="GO" id="GO:0000049">
    <property type="term" value="F:tRNA binding"/>
    <property type="evidence" value="ECO:0007669"/>
    <property type="project" value="UniProtKB-UniRule"/>
</dbReference>
<dbReference type="GO" id="GO:0006412">
    <property type="term" value="P:translation"/>
    <property type="evidence" value="ECO:0007669"/>
    <property type="project" value="UniProtKB-UniRule"/>
</dbReference>
<dbReference type="CDD" id="cd14869">
    <property type="entry name" value="uS7_Bacteria"/>
    <property type="match status" value="1"/>
</dbReference>
<dbReference type="FunFam" id="1.10.455.10:FF:000001">
    <property type="entry name" value="30S ribosomal protein S7"/>
    <property type="match status" value="1"/>
</dbReference>
<dbReference type="Gene3D" id="1.10.455.10">
    <property type="entry name" value="Ribosomal protein S7 domain"/>
    <property type="match status" value="1"/>
</dbReference>
<dbReference type="HAMAP" id="MF_00480_B">
    <property type="entry name" value="Ribosomal_uS7_B"/>
    <property type="match status" value="1"/>
</dbReference>
<dbReference type="InterPro" id="IPR000235">
    <property type="entry name" value="Ribosomal_uS7"/>
</dbReference>
<dbReference type="InterPro" id="IPR005717">
    <property type="entry name" value="Ribosomal_uS7_bac/org-type"/>
</dbReference>
<dbReference type="InterPro" id="IPR020606">
    <property type="entry name" value="Ribosomal_uS7_CS"/>
</dbReference>
<dbReference type="InterPro" id="IPR023798">
    <property type="entry name" value="Ribosomal_uS7_dom"/>
</dbReference>
<dbReference type="InterPro" id="IPR036823">
    <property type="entry name" value="Ribosomal_uS7_dom_sf"/>
</dbReference>
<dbReference type="NCBIfam" id="TIGR01029">
    <property type="entry name" value="rpsG_bact"/>
    <property type="match status" value="1"/>
</dbReference>
<dbReference type="PANTHER" id="PTHR11205">
    <property type="entry name" value="RIBOSOMAL PROTEIN S7"/>
    <property type="match status" value="1"/>
</dbReference>
<dbReference type="Pfam" id="PF00177">
    <property type="entry name" value="Ribosomal_S7"/>
    <property type="match status" value="1"/>
</dbReference>
<dbReference type="PIRSF" id="PIRSF002122">
    <property type="entry name" value="RPS7p_RPS7a_RPS5e_RPS7o"/>
    <property type="match status" value="1"/>
</dbReference>
<dbReference type="SUPFAM" id="SSF47973">
    <property type="entry name" value="Ribosomal protein S7"/>
    <property type="match status" value="1"/>
</dbReference>
<dbReference type="PROSITE" id="PS00052">
    <property type="entry name" value="RIBOSOMAL_S7"/>
    <property type="match status" value="1"/>
</dbReference>
<evidence type="ECO:0000255" key="1">
    <source>
        <dbReference type="HAMAP-Rule" id="MF_00480"/>
    </source>
</evidence>
<evidence type="ECO:0000305" key="2"/>
<keyword id="KW-0687">Ribonucleoprotein</keyword>
<keyword id="KW-0689">Ribosomal protein</keyword>
<keyword id="KW-0694">RNA-binding</keyword>
<keyword id="KW-0699">rRNA-binding</keyword>
<keyword id="KW-0820">tRNA-binding</keyword>
<accession>A1USL0</accession>
<gene>
    <name evidence="1" type="primary">rpsG1</name>
    <name type="ordered locus">BARBAKC583_0662</name>
</gene>
<gene>
    <name evidence="1" type="primary">rpsG2</name>
    <name type="ordered locus">BARBAKC583_0694</name>
</gene>
<organism>
    <name type="scientific">Bartonella bacilliformis (strain ATCC 35685 / KC583 / Herrer 020/F12,63)</name>
    <dbReference type="NCBI Taxonomy" id="360095"/>
    <lineage>
        <taxon>Bacteria</taxon>
        <taxon>Pseudomonadati</taxon>
        <taxon>Pseudomonadota</taxon>
        <taxon>Alphaproteobacteria</taxon>
        <taxon>Hyphomicrobiales</taxon>
        <taxon>Bartonellaceae</taxon>
        <taxon>Bartonella</taxon>
    </lineage>
</organism>
<sequence>MSRRHRAEKREINPDPKFGDVVITKFMNAIMFDGKKSVAERIVYGALDVVEGKVKTDPVALFHQALENVAPHIEVRSRRVGGATYQVPVDVRPDRRQALAIRWLIKAARGRNETAMIDRLSGELVDAANNRGTAVKKREDVHRMAEANRAFSHYRW</sequence>
<comment type="function">
    <text evidence="1">One of the primary rRNA binding proteins, it binds directly to 16S rRNA where it nucleates assembly of the head domain of the 30S subunit. Is located at the subunit interface close to the decoding center, probably blocks exit of the E-site tRNA.</text>
</comment>
<comment type="subunit">
    <text evidence="1">Part of the 30S ribosomal subunit. Contacts proteins S9 and S11.</text>
</comment>
<comment type="similarity">
    <text evidence="1">Belongs to the universal ribosomal protein uS7 family.</text>
</comment>
<feature type="chain" id="PRO_0000344287" description="Small ribosomal subunit protein uS7A/uS7B">
    <location>
        <begin position="1"/>
        <end position="156"/>
    </location>
</feature>
<protein>
    <recommendedName>
        <fullName evidence="2">Small ribosomal subunit protein uS7A/uS7B</fullName>
    </recommendedName>
    <alternativeName>
        <fullName evidence="1">30S ribosomal protein S7</fullName>
    </alternativeName>
</protein>
<name>RS7_BARBK</name>